<evidence type="ECO:0000255" key="1">
    <source>
        <dbReference type="HAMAP-Rule" id="MF_01012"/>
    </source>
</evidence>
<proteinExistence type="inferred from homology"/>
<gene>
    <name evidence="1" type="primary">rlmC</name>
    <name type="synonym">rumB</name>
    <name type="ordered locus">Ent638_1373</name>
</gene>
<reference key="1">
    <citation type="journal article" date="2010" name="PLoS Genet.">
        <title>Genome sequence of the plant growth promoting endophytic bacterium Enterobacter sp. 638.</title>
        <authorList>
            <person name="Taghavi S."/>
            <person name="van der Lelie D."/>
            <person name="Hoffman A."/>
            <person name="Zhang Y.B."/>
            <person name="Walla M.D."/>
            <person name="Vangronsveld J."/>
            <person name="Newman L."/>
            <person name="Monchy S."/>
        </authorList>
    </citation>
    <scope>NUCLEOTIDE SEQUENCE [LARGE SCALE GENOMIC DNA]</scope>
    <source>
        <strain>638</strain>
    </source>
</reference>
<sequence>MQCALFDAGRCRSCQWIEQPVSQQLSAKMTDLQQLLAAHPVAEWCAPVSGPEQGFRNKAKMVVSGSVEKPLLGMLHRDGTPEDLTDCPLYPASFEPVFAALKPFIARAGLTPYNVERKRGELKYLLLTESQLDGGMMLRFILRSEAKLEQLRAALPWLQQQLPQLKVITANIQPVHMAIMEGEREVFFTDQQALAERFNDVPLWIRPHSFFQTNPTVASQLYATARDWVRALNIHHMWDLFCGVGGFGLHCATPQMTLTGIEISPEAIACAKQSAAQLGLTDLHFQALDSAEFATGQGRVPELVLVNPPRRGIGKTLCDYLSQMAPDFIIYSSCNAQTMAKDFGHLPGYRVERVQLFDMFPHTAHYEVLTLLVKS</sequence>
<accession>A4W8M4</accession>
<organism>
    <name type="scientific">Enterobacter sp. (strain 638)</name>
    <dbReference type="NCBI Taxonomy" id="399742"/>
    <lineage>
        <taxon>Bacteria</taxon>
        <taxon>Pseudomonadati</taxon>
        <taxon>Pseudomonadota</taxon>
        <taxon>Gammaproteobacteria</taxon>
        <taxon>Enterobacterales</taxon>
        <taxon>Enterobacteriaceae</taxon>
        <taxon>Enterobacter</taxon>
    </lineage>
</organism>
<feature type="chain" id="PRO_1000063000" description="23S rRNA (uracil(747)-C(5))-methyltransferase RlmC">
    <location>
        <begin position="1"/>
        <end position="375"/>
    </location>
</feature>
<feature type="active site" description="Nucleophile" evidence="1">
    <location>
        <position position="334"/>
    </location>
</feature>
<feature type="binding site" evidence="1">
    <location>
        <position position="3"/>
    </location>
    <ligand>
        <name>[4Fe-4S] cluster</name>
        <dbReference type="ChEBI" id="CHEBI:49883"/>
    </ligand>
</feature>
<feature type="binding site" evidence="1">
    <location>
        <position position="11"/>
    </location>
    <ligand>
        <name>[4Fe-4S] cluster</name>
        <dbReference type="ChEBI" id="CHEBI:49883"/>
    </ligand>
</feature>
<feature type="binding site" evidence="1">
    <location>
        <position position="14"/>
    </location>
    <ligand>
        <name>[4Fe-4S] cluster</name>
        <dbReference type="ChEBI" id="CHEBI:49883"/>
    </ligand>
</feature>
<feature type="binding site" evidence="1">
    <location>
        <position position="87"/>
    </location>
    <ligand>
        <name>[4Fe-4S] cluster</name>
        <dbReference type="ChEBI" id="CHEBI:49883"/>
    </ligand>
</feature>
<feature type="binding site" evidence="1">
    <location>
        <position position="212"/>
    </location>
    <ligand>
        <name>S-adenosyl-L-methionine</name>
        <dbReference type="ChEBI" id="CHEBI:59789"/>
    </ligand>
</feature>
<feature type="binding site" evidence="1">
    <location>
        <position position="241"/>
    </location>
    <ligand>
        <name>S-adenosyl-L-methionine</name>
        <dbReference type="ChEBI" id="CHEBI:59789"/>
    </ligand>
</feature>
<feature type="binding site" evidence="1">
    <location>
        <position position="262"/>
    </location>
    <ligand>
        <name>S-adenosyl-L-methionine</name>
        <dbReference type="ChEBI" id="CHEBI:59789"/>
    </ligand>
</feature>
<feature type="binding site" evidence="1">
    <location>
        <position position="307"/>
    </location>
    <ligand>
        <name>S-adenosyl-L-methionine</name>
        <dbReference type="ChEBI" id="CHEBI:59789"/>
    </ligand>
</feature>
<dbReference type="EC" id="2.1.1.189" evidence="1"/>
<dbReference type="EMBL" id="CP000653">
    <property type="protein sequence ID" value="ABP60054.1"/>
    <property type="molecule type" value="Genomic_DNA"/>
</dbReference>
<dbReference type="RefSeq" id="WP_012016773.1">
    <property type="nucleotide sequence ID" value="NC_009436.1"/>
</dbReference>
<dbReference type="SMR" id="A4W8M4"/>
<dbReference type="STRING" id="399742.Ent638_1373"/>
<dbReference type="KEGG" id="ent:Ent638_1373"/>
<dbReference type="eggNOG" id="COG2265">
    <property type="taxonomic scope" value="Bacteria"/>
</dbReference>
<dbReference type="HOGENOM" id="CLU_014689_0_0_6"/>
<dbReference type="OrthoDB" id="9804590at2"/>
<dbReference type="Proteomes" id="UP000000230">
    <property type="component" value="Chromosome"/>
</dbReference>
<dbReference type="GO" id="GO:0051539">
    <property type="term" value="F:4 iron, 4 sulfur cluster binding"/>
    <property type="evidence" value="ECO:0007669"/>
    <property type="project" value="UniProtKB-KW"/>
</dbReference>
<dbReference type="GO" id="GO:0005506">
    <property type="term" value="F:iron ion binding"/>
    <property type="evidence" value="ECO:0007669"/>
    <property type="project" value="UniProtKB-UniRule"/>
</dbReference>
<dbReference type="GO" id="GO:0070041">
    <property type="term" value="F:rRNA (uridine-C5-)-methyltransferase activity"/>
    <property type="evidence" value="ECO:0007669"/>
    <property type="project" value="UniProtKB-UniRule"/>
</dbReference>
<dbReference type="GO" id="GO:0070475">
    <property type="term" value="P:rRNA base methylation"/>
    <property type="evidence" value="ECO:0007669"/>
    <property type="project" value="TreeGrafter"/>
</dbReference>
<dbReference type="CDD" id="cd02440">
    <property type="entry name" value="AdoMet_MTases"/>
    <property type="match status" value="1"/>
</dbReference>
<dbReference type="FunFam" id="2.40.50.1070:FF:000002">
    <property type="entry name" value="23S rRNA (uracil(747)-C(5))-methyltransferase RlmC"/>
    <property type="match status" value="1"/>
</dbReference>
<dbReference type="Gene3D" id="2.40.50.1070">
    <property type="match status" value="1"/>
</dbReference>
<dbReference type="Gene3D" id="3.40.50.150">
    <property type="entry name" value="Vaccinia Virus protein VP39"/>
    <property type="match status" value="1"/>
</dbReference>
<dbReference type="HAMAP" id="MF_01012">
    <property type="entry name" value="23SrRNA_methyltr_RlmC"/>
    <property type="match status" value="1"/>
</dbReference>
<dbReference type="InterPro" id="IPR011825">
    <property type="entry name" value="23SrRNA_MeTrfase_RlmC"/>
</dbReference>
<dbReference type="InterPro" id="IPR030390">
    <property type="entry name" value="MeTrfase_TrmA_AS"/>
</dbReference>
<dbReference type="InterPro" id="IPR030391">
    <property type="entry name" value="MeTrfase_TrmA_CS"/>
</dbReference>
<dbReference type="InterPro" id="IPR029063">
    <property type="entry name" value="SAM-dependent_MTases_sf"/>
</dbReference>
<dbReference type="InterPro" id="IPR010280">
    <property type="entry name" value="U5_MeTrfase_fam"/>
</dbReference>
<dbReference type="NCBIfam" id="TIGR02085">
    <property type="entry name" value="meth_trns_rumB"/>
    <property type="match status" value="1"/>
</dbReference>
<dbReference type="PANTHER" id="PTHR11061">
    <property type="entry name" value="RNA M5U METHYLTRANSFERASE"/>
    <property type="match status" value="1"/>
</dbReference>
<dbReference type="PANTHER" id="PTHR11061:SF30">
    <property type="entry name" value="TRNA (URACIL(54)-C(5))-METHYLTRANSFERASE"/>
    <property type="match status" value="1"/>
</dbReference>
<dbReference type="Pfam" id="PF05958">
    <property type="entry name" value="tRNA_U5-meth_tr"/>
    <property type="match status" value="1"/>
</dbReference>
<dbReference type="SUPFAM" id="SSF53335">
    <property type="entry name" value="S-adenosyl-L-methionine-dependent methyltransferases"/>
    <property type="match status" value="1"/>
</dbReference>
<dbReference type="PROSITE" id="PS51687">
    <property type="entry name" value="SAM_MT_RNA_M5U"/>
    <property type="match status" value="1"/>
</dbReference>
<dbReference type="PROSITE" id="PS01230">
    <property type="entry name" value="TRMA_1"/>
    <property type="match status" value="1"/>
</dbReference>
<dbReference type="PROSITE" id="PS01231">
    <property type="entry name" value="TRMA_2"/>
    <property type="match status" value="1"/>
</dbReference>
<protein>
    <recommendedName>
        <fullName evidence="1">23S rRNA (uracil(747)-C(5))-methyltransferase RlmC</fullName>
        <ecNumber evidence="1">2.1.1.189</ecNumber>
    </recommendedName>
    <alternativeName>
        <fullName evidence="1">23S rRNA(m5U747)-methyltransferase</fullName>
    </alternativeName>
</protein>
<name>RLMC_ENT38</name>
<keyword id="KW-0004">4Fe-4S</keyword>
<keyword id="KW-0408">Iron</keyword>
<keyword id="KW-0411">Iron-sulfur</keyword>
<keyword id="KW-0479">Metal-binding</keyword>
<keyword id="KW-0489">Methyltransferase</keyword>
<keyword id="KW-0698">rRNA processing</keyword>
<keyword id="KW-0949">S-adenosyl-L-methionine</keyword>
<keyword id="KW-0808">Transferase</keyword>
<comment type="function">
    <text evidence="1">Catalyzes the formation of 5-methyl-uridine at position 747 (m5U747) in 23S rRNA.</text>
</comment>
<comment type="catalytic activity">
    <reaction evidence="1">
        <text>uridine(747) in 23S rRNA + S-adenosyl-L-methionine = 5-methyluridine(747) in 23S rRNA + S-adenosyl-L-homocysteine + H(+)</text>
        <dbReference type="Rhea" id="RHEA:42628"/>
        <dbReference type="Rhea" id="RHEA-COMP:10154"/>
        <dbReference type="Rhea" id="RHEA-COMP:10155"/>
        <dbReference type="ChEBI" id="CHEBI:15378"/>
        <dbReference type="ChEBI" id="CHEBI:57856"/>
        <dbReference type="ChEBI" id="CHEBI:59789"/>
        <dbReference type="ChEBI" id="CHEBI:65315"/>
        <dbReference type="ChEBI" id="CHEBI:74447"/>
        <dbReference type="EC" id="2.1.1.189"/>
    </reaction>
</comment>
<comment type="similarity">
    <text evidence="1">Belongs to the class I-like SAM-binding methyltransferase superfamily. RNA M5U methyltransferase family. RlmC subfamily.</text>
</comment>